<organism>
    <name type="scientific">Gaeumannomyces graminis</name>
    <name type="common">Turf grass take-all root rot fungus</name>
    <name type="synonym">Rhaphidophora graminis</name>
    <dbReference type="NCBI Taxonomy" id="29850"/>
    <lineage>
        <taxon>Eukaryota</taxon>
        <taxon>Fungi</taxon>
        <taxon>Dikarya</taxon>
        <taxon>Ascomycota</taxon>
        <taxon>Pezizomycotina</taxon>
        <taxon>Sordariomycetes</taxon>
        <taxon>Sordariomycetidae</taxon>
        <taxon>Magnaporthales</taxon>
        <taxon>Magnaporthaceae</taxon>
        <taxon>Gaeumannomyces</taxon>
    </lineage>
</organism>
<name>LIDS_GAEGR</name>
<keyword id="KW-0223">Dioxygenase</keyword>
<keyword id="KW-0903">Direct protein sequencing</keyword>
<keyword id="KW-0349">Heme</keyword>
<keyword id="KW-0408">Iron</keyword>
<keyword id="KW-0413">Isomerase</keyword>
<keyword id="KW-0479">Metal-binding</keyword>
<keyword id="KW-0560">Oxidoreductase</keyword>
<keyword id="KW-0575">Peroxidase</keyword>
<evidence type="ECO:0000250" key="1">
    <source>
        <dbReference type="UniProtKB" id="G4N4J5"/>
    </source>
</evidence>
<evidence type="ECO:0000250" key="2">
    <source>
        <dbReference type="UniProtKB" id="P04798"/>
    </source>
</evidence>
<evidence type="ECO:0000255" key="3"/>
<evidence type="ECO:0000255" key="4">
    <source>
        <dbReference type="PROSITE-ProRule" id="PRU00298"/>
    </source>
</evidence>
<evidence type="ECO:0000256" key="5">
    <source>
        <dbReference type="SAM" id="MobiDB-lite"/>
    </source>
</evidence>
<evidence type="ECO:0000269" key="6">
    <source>
    </source>
</evidence>
<evidence type="ECO:0000303" key="7">
    <source>
    </source>
</evidence>
<evidence type="ECO:0000305" key="8"/>
<protein>
    <recommendedName>
        <fullName evidence="7">Linoleate diol synthase</fullName>
        <shortName evidence="8">LDS</shortName>
    </recommendedName>
    <alternativeName>
        <fullName evidence="7">Linoleate (8R)-dioxygenase</fullName>
        <shortName evidence="7">Linoleate 8-dioxygenase</shortName>
    </alternativeName>
    <domain>
        <recommendedName>
            <fullName evidence="7">Linoleate 8R-lipoxygenase</fullName>
            <ecNumber evidence="6">1.13.11.60</ecNumber>
        </recommendedName>
    </domain>
    <domain>
        <recommendedName>
            <fullName evidence="7">9,12-octadecadienoate 8-hydroperoxide 8R-isomerase</fullName>
            <ecNumber evidence="6">5.4.4.6</ecNumber>
        </recommendedName>
    </domain>
</protein>
<feature type="chain" id="PRO_0000055599" description="Linoleate diol synthase">
    <location>
        <begin position="1"/>
        <end position="1165"/>
    </location>
</feature>
<feature type="region of interest" description="Fatty acid alpha-dioxygenase" evidence="1">
    <location>
        <begin position="104"/>
        <end position="448"/>
    </location>
</feature>
<feature type="region of interest" description="Epoxy alcohol synthase" evidence="1">
    <location>
        <begin position="666"/>
        <end position="1161"/>
    </location>
</feature>
<feature type="region of interest" description="Disordered" evidence="5">
    <location>
        <begin position="1114"/>
        <end position="1134"/>
    </location>
</feature>
<feature type="active site" evidence="3">
    <location>
        <position position="376"/>
    </location>
</feature>
<feature type="binding site" description="axial binding residue" evidence="4">
    <location>
        <position position="203"/>
    </location>
    <ligand>
        <name>heme b</name>
        <dbReference type="ChEBI" id="CHEBI:60344"/>
    </ligand>
    <ligandPart>
        <name>Fe</name>
        <dbReference type="ChEBI" id="CHEBI:18248"/>
    </ligandPart>
</feature>
<feature type="binding site" evidence="4">
    <location>
        <position position="204"/>
    </location>
    <ligand>
        <name>Ca(2+)</name>
        <dbReference type="ChEBI" id="CHEBI:29108"/>
    </ligand>
</feature>
<feature type="binding site" evidence="4">
    <location>
        <position position="219"/>
    </location>
    <ligand>
        <name>Ca(2+)</name>
        <dbReference type="ChEBI" id="CHEBI:29108"/>
    </ligand>
</feature>
<feature type="binding site" evidence="4">
    <location>
        <position position="221"/>
    </location>
    <ligand>
        <name>Ca(2+)</name>
        <dbReference type="ChEBI" id="CHEBI:29108"/>
    </ligand>
</feature>
<feature type="binding site" evidence="4">
    <location>
        <position position="223"/>
    </location>
    <ligand>
        <name>Ca(2+)</name>
        <dbReference type="ChEBI" id="CHEBI:29108"/>
    </ligand>
</feature>
<feature type="binding site" evidence="4">
    <location>
        <position position="225"/>
    </location>
    <ligand>
        <name>Ca(2+)</name>
        <dbReference type="ChEBI" id="CHEBI:29108"/>
    </ligand>
</feature>
<feature type="binding site" description="axial binding residue" evidence="4">
    <location>
        <position position="379"/>
    </location>
    <ligand>
        <name>heme b</name>
        <dbReference type="ChEBI" id="CHEBI:60344"/>
    </ligand>
    <ligandPart>
        <name>Fe</name>
        <dbReference type="ChEBI" id="CHEBI:18248"/>
    </ligandPart>
</feature>
<feature type="binding site" description="axial binding residue" evidence="2">
    <location>
        <position position="1080"/>
    </location>
    <ligand>
        <name>heme</name>
        <dbReference type="ChEBI" id="CHEBI:30413"/>
    </ligand>
    <ligandPart>
        <name>Fe</name>
        <dbReference type="ChEBI" id="CHEBI:18248"/>
    </ligandPart>
</feature>
<sequence length="1165" mass="128322">MTVSTHHDDSPGLSGRLRDLLHHVFGNQKSPTVYPNAPGNSAKPVPTGLADDIDKLGFKDIDTLLIFLNSAVKGVNDDQQFLLEKMIQLLAKLPPASREGKKLTDGLINDLWDSLDHPPVASLGKGFSFREPDGSNNNIHLPSLGAANTPYARSTKPLVFQNPNPPDPATIFDTLMVRDPAKFRPHPNKISSMLFYLATIITHDIFQTSPRDFNINLTSSYLDLSPLYGRNHDEQMAVRTGKDGLLKPDTFSSKRVIGFPPGVGAFLIMFNRFHNYVVTQLAKINEGGRFKRPTTPDDTAGWETYDNSLFQTGRLITCGLYINIVLGDYVRTILNLNRANTTWNLDPRTKEGKSLLSKPTPEAVGNQVSVEFNLIYRWHCTISERDDKWTTNAMREALGGQDPATAKMEDVMRALGMFEKNIPDEPEKRTLAGLTRQSDGAFDDTELVKILQESIEDVAGAFGPNHVPACMRAIEILGIKQSRTWNVATLNEFRQFIGLTPHDSFYHMNPDPKICKILAQMYDSPDAVELYPGIMAEAAKPPFSPGSGLCPPYTTSRAILSDAVSLVRGDRFYTVDYTPRNITNWGFNEASTDKAVDWGHVIYKLFFRAFPNHFLPNSVYAHFPFVVPSENKLIFEGLGAANKYSWDPPKARAPIQFIRSHKAVLEVLSNQKDYKVTWGPAIKMLSGDPATSFALAGDEPANAASRHHVIAALTAPKQWRDEVRRFYEVTTRDLLRRHGAPVHGVGAGPRTHEVDVIRDVIGLAHARFMASLFSLPLKEEGKEEGAYGEHELYRSLVTIFAAIFWDSDVCNSLKLHQASKAAADKMSALIAEHVREMEAGTGFLGALGKLKDLITGNDVHANGNGVYTNGNGVYTNGNGVHTNGNGVHTNGNGVPHAAPSLRSFGDQLLQRMLSQDGRSIEETVSGTILPVVMAGTANQTQLLAQCLDYYLGVGEKHLPEMKRLAMLNTSEADEKLLKYTMEGCRIRGCVALYRAVVTDQAVDDTIPCIPNKDDPTFARPLSNPQVAESARTLKLSTGTRMLVDLTTASHDPAAFPDPDEVRLDRPLESYVHFGLGPHRCAGEPISQIALSSVMKVLLQLDGLRRAAGPRGEIRSYPASQWPGQAGRPPRDPAWSGLRTFTSADQSAFSPLATTMKINWEGRGDL</sequence>
<dbReference type="EC" id="1.13.11.60" evidence="6"/>
<dbReference type="EC" id="5.4.4.6" evidence="6"/>
<dbReference type="EMBL" id="AF124979">
    <property type="protein sequence ID" value="AAD49559.3"/>
    <property type="molecule type" value="Genomic_DNA"/>
</dbReference>
<dbReference type="SMR" id="Q9UUS2"/>
<dbReference type="PeroxiBase" id="4150">
    <property type="entry name" value="GgrLDS"/>
</dbReference>
<dbReference type="KEGG" id="ag:AAD49559"/>
<dbReference type="BRENDA" id="1.13.11.60">
    <property type="organism ID" value="2376"/>
</dbReference>
<dbReference type="BRENDA" id="5.4.4.6">
    <property type="organism ID" value="2376"/>
</dbReference>
<dbReference type="SABIO-RK" id="Q9UUS2"/>
<dbReference type="GO" id="GO:0052879">
    <property type="term" value="F:9,12-octadecadienoate 8-hydroperoxide 8S-isomerase activity"/>
    <property type="evidence" value="ECO:0007669"/>
    <property type="project" value="UniProtKB-EC"/>
</dbReference>
<dbReference type="GO" id="GO:0020037">
    <property type="term" value="F:heme binding"/>
    <property type="evidence" value="ECO:0007669"/>
    <property type="project" value="InterPro"/>
</dbReference>
<dbReference type="GO" id="GO:0005506">
    <property type="term" value="F:iron ion binding"/>
    <property type="evidence" value="ECO:0007669"/>
    <property type="project" value="InterPro"/>
</dbReference>
<dbReference type="GO" id="GO:0052878">
    <property type="term" value="F:linoleate 8R-lipoxygenase activity"/>
    <property type="evidence" value="ECO:0007669"/>
    <property type="project" value="UniProtKB-EC"/>
</dbReference>
<dbReference type="GO" id="GO:0004497">
    <property type="term" value="F:monooxygenase activity"/>
    <property type="evidence" value="ECO:0007669"/>
    <property type="project" value="InterPro"/>
</dbReference>
<dbReference type="GO" id="GO:0016705">
    <property type="term" value="F:oxidoreductase activity, acting on paired donors, with incorporation or reduction of molecular oxygen"/>
    <property type="evidence" value="ECO:0007669"/>
    <property type="project" value="InterPro"/>
</dbReference>
<dbReference type="GO" id="GO:0004601">
    <property type="term" value="F:peroxidase activity"/>
    <property type="evidence" value="ECO:0007669"/>
    <property type="project" value="UniProtKB-KW"/>
</dbReference>
<dbReference type="GO" id="GO:0006631">
    <property type="term" value="P:fatty acid metabolic process"/>
    <property type="evidence" value="ECO:0007669"/>
    <property type="project" value="UniProtKB-ARBA"/>
</dbReference>
<dbReference type="GO" id="GO:0006979">
    <property type="term" value="P:response to oxidative stress"/>
    <property type="evidence" value="ECO:0007669"/>
    <property type="project" value="InterPro"/>
</dbReference>
<dbReference type="CDD" id="cd20612">
    <property type="entry name" value="CYP_LDS-like_C"/>
    <property type="match status" value="1"/>
</dbReference>
<dbReference type="CDD" id="cd09817">
    <property type="entry name" value="linoleate_diol_synthase_like"/>
    <property type="match status" value="1"/>
</dbReference>
<dbReference type="Gene3D" id="1.10.630.10">
    <property type="entry name" value="Cytochrome P450"/>
    <property type="match status" value="1"/>
</dbReference>
<dbReference type="Gene3D" id="1.10.640.10">
    <property type="entry name" value="Haem peroxidase domain superfamily, animal type"/>
    <property type="match status" value="1"/>
</dbReference>
<dbReference type="InterPro" id="IPR001128">
    <property type="entry name" value="Cyt_P450"/>
</dbReference>
<dbReference type="InterPro" id="IPR017972">
    <property type="entry name" value="Cyt_P450_CS"/>
</dbReference>
<dbReference type="InterPro" id="IPR036396">
    <property type="entry name" value="Cyt_P450_sf"/>
</dbReference>
<dbReference type="InterPro" id="IPR019791">
    <property type="entry name" value="Haem_peroxidase_animal"/>
</dbReference>
<dbReference type="InterPro" id="IPR010255">
    <property type="entry name" value="Haem_peroxidase_sf"/>
</dbReference>
<dbReference type="InterPro" id="IPR037120">
    <property type="entry name" value="Haem_peroxidase_sf_animal"/>
</dbReference>
<dbReference type="InterPro" id="IPR050783">
    <property type="entry name" value="Oxylipin_biosynth_metab"/>
</dbReference>
<dbReference type="InterPro" id="IPR034812">
    <property type="entry name" value="Ppo-like_N"/>
</dbReference>
<dbReference type="PANTHER" id="PTHR11903">
    <property type="entry name" value="PROSTAGLANDIN G/H SYNTHASE"/>
    <property type="match status" value="1"/>
</dbReference>
<dbReference type="PANTHER" id="PTHR11903:SF37">
    <property type="entry name" value="PSI-PRODUCING OXYGENASE A"/>
    <property type="match status" value="1"/>
</dbReference>
<dbReference type="Pfam" id="PF03098">
    <property type="entry name" value="An_peroxidase"/>
    <property type="match status" value="1"/>
</dbReference>
<dbReference type="Pfam" id="PF00067">
    <property type="entry name" value="p450"/>
    <property type="match status" value="1"/>
</dbReference>
<dbReference type="PRINTS" id="PR00457">
    <property type="entry name" value="ANPEROXIDASE"/>
</dbReference>
<dbReference type="SUPFAM" id="SSF48264">
    <property type="entry name" value="Cytochrome P450"/>
    <property type="match status" value="1"/>
</dbReference>
<dbReference type="SUPFAM" id="SSF48113">
    <property type="entry name" value="Heme-dependent peroxidases"/>
    <property type="match status" value="1"/>
</dbReference>
<dbReference type="PROSITE" id="PS00086">
    <property type="entry name" value="CYTOCHROME_P450"/>
    <property type="match status" value="1"/>
</dbReference>
<dbReference type="PROSITE" id="PS50292">
    <property type="entry name" value="PEROXIDASE_3"/>
    <property type="match status" value="1"/>
</dbReference>
<proteinExistence type="evidence at protein level"/>
<accession>Q9UUS2</accession>
<comment type="function">
    <text evidence="6">7,8-linoleate diol synthase is a bifunctional enzyme that converts linoleic acid (18:2n-6) into 8-hydroperoxy-8(E),12(Z)-octadecadienoic acid (8-HPODE) and then catalyzes the isomerization of the resulting hydroperoxide to 7,8-dihydroxy-9(Z),12(Z)-octadecadienoic acid (7,8-DiHODE).</text>
</comment>
<comment type="catalytic activity">
    <reaction evidence="6">
        <text>(9Z,12Z)-octadecadienoate + O2 = (8R,9Z,12Z)-8-hydroperoxyoctadeca-9,12-dienoate</text>
        <dbReference type="Rhea" id="RHEA:25395"/>
        <dbReference type="ChEBI" id="CHEBI:15379"/>
        <dbReference type="ChEBI" id="CHEBI:30245"/>
        <dbReference type="ChEBI" id="CHEBI:58659"/>
        <dbReference type="EC" id="1.13.11.60"/>
    </reaction>
</comment>
<comment type="catalytic activity">
    <reaction evidence="6">
        <text>(8R,9Z,12Z)-8-hydroperoxyoctadeca-9,12-dienoate = (7S,8S,9Z,12Z)-7,8-dihydroxyoctadeca-9,12-dienoate</text>
        <dbReference type="Rhea" id="RHEA:25399"/>
        <dbReference type="ChEBI" id="CHEBI:57468"/>
        <dbReference type="ChEBI" id="CHEBI:58659"/>
        <dbReference type="EC" id="5.4.4.6"/>
    </reaction>
</comment>
<comment type="cofactor">
    <cofactor evidence="6">
        <name>heme b</name>
        <dbReference type="ChEBI" id="CHEBI:60344"/>
    </cofactor>
</comment>
<comment type="cofactor">
    <cofactor evidence="4">
        <name>Ca(2+)</name>
        <dbReference type="ChEBI" id="CHEBI:29108"/>
    </cofactor>
</comment>
<comment type="cofactor">
    <cofactor evidence="2">
        <name>heme</name>
        <dbReference type="ChEBI" id="CHEBI:30413"/>
    </cofactor>
</comment>
<comment type="biophysicochemical properties">
    <kinetics>
        <KM evidence="6">30 uM for oxygen</KM>
        <KM evidence="6">8 uM for linoleic acid</KM>
        <Vmax evidence="6">2.2 umol/min/mg enzyme toward oxygen</Vmax>
        <Vmax evidence="6">4.0 umol/min/mg enzyme toward linoleic acid</Vmax>
    </kinetics>
    <phDependence>
        <text evidence="6">Optimum pH is 7.2-7.4.</text>
    </phDependence>
</comment>
<comment type="subunit">
    <text evidence="6">Homotetramer.</text>
</comment>
<comment type="PTM">
    <text>The N-terminus is blocked.</text>
</comment>
<comment type="similarity">
    <text evidence="4">Belongs to the peroxidase family.</text>
</comment>
<reference key="1">
    <citation type="journal article" date="1999" name="J. Biol. Chem.">
        <title>Cloning of linoleate diol synthase reveals homology with prostaglandin H synthases.</title>
        <authorList>
            <person name="Hoernsten L."/>
            <person name="Su C."/>
            <person name="Osbourn A.E."/>
            <person name="Garosi P."/>
            <person name="Hellman U."/>
            <person name="Wernstedt C."/>
            <person name="Oliw E.H."/>
        </authorList>
    </citation>
    <scope>NUCLEOTIDE SEQUENCE [GENOMIC DNA]</scope>
    <scope>PARTIAL PROTEIN SEQUENCE</scope>
    <source>
        <strain>CBS 903.73 / DAR 23471</strain>
    </source>
</reference>
<reference key="2">
    <citation type="journal article" date="1996" name="J. Biol. Chem.">
        <title>Purification and characterization of linoleate 8-dioxygenase from the fungus Gaeumannomyces graminis as a novel hemoprotein.</title>
        <authorList>
            <person name="Su C."/>
            <person name="Oliw E.H."/>
        </authorList>
    </citation>
    <scope>FUNCTION</scope>
    <scope>CATALYTIC ACTIVITY</scope>
    <scope>COFACTOR</scope>
    <scope>SUBUNIT</scope>
    <scope>BIOPHYSICOCHEMICAL PROPERTIES</scope>
</reference>